<reference key="1">
    <citation type="journal article" date="2007" name="ISME J.">
        <title>Population level functional diversity in a microbial community revealed by comparative genomic and metagenomic analyses.</title>
        <authorList>
            <person name="Bhaya D."/>
            <person name="Grossman A.R."/>
            <person name="Steunou A.-S."/>
            <person name="Khuri N."/>
            <person name="Cohan F.M."/>
            <person name="Hamamura N."/>
            <person name="Melendrez M.C."/>
            <person name="Bateson M.M."/>
            <person name="Ward D.M."/>
            <person name="Heidelberg J.F."/>
        </authorList>
    </citation>
    <scope>NUCLEOTIDE SEQUENCE [LARGE SCALE GENOMIC DNA]</scope>
    <source>
        <strain>JA-2-3B'a(2-13)</strain>
    </source>
</reference>
<organism>
    <name type="scientific">Synechococcus sp. (strain JA-2-3B'a(2-13))</name>
    <name type="common">Cyanobacteria bacterium Yellowstone B-Prime</name>
    <dbReference type="NCBI Taxonomy" id="321332"/>
    <lineage>
        <taxon>Bacteria</taxon>
        <taxon>Bacillati</taxon>
        <taxon>Cyanobacteriota</taxon>
        <taxon>Cyanophyceae</taxon>
        <taxon>Synechococcales</taxon>
        <taxon>Synechococcaceae</taxon>
        <taxon>Synechococcus</taxon>
    </lineage>
</organism>
<comment type="function">
    <text evidence="1">Cleaves peptides in various proteins in a process that requires ATP hydrolysis. Has a chymotrypsin-like activity. Plays a major role in the degradation of misfolded proteins.</text>
</comment>
<comment type="catalytic activity">
    <reaction evidence="1">
        <text>Hydrolysis of proteins to small peptides in the presence of ATP and magnesium. alpha-casein is the usual test substrate. In the absence of ATP, only oligopeptides shorter than five residues are hydrolyzed (such as succinyl-Leu-Tyr-|-NHMec, and Leu-Tyr-Leu-|-Tyr-Trp, in which cleavage of the -Tyr-|-Leu- and -Tyr-|-Trp bonds also occurs).</text>
        <dbReference type="EC" id="3.4.21.92"/>
    </reaction>
</comment>
<comment type="subunit">
    <text evidence="1">Fourteen ClpP subunits assemble into 2 heptameric rings which stack back to back to give a disk-like structure with a central cavity, resembling the structure of eukaryotic proteasomes.</text>
</comment>
<comment type="subcellular location">
    <subcellularLocation>
        <location evidence="1">Cytoplasm</location>
    </subcellularLocation>
</comment>
<comment type="similarity">
    <text evidence="1">Belongs to the peptidase S14 family.</text>
</comment>
<accession>Q2JHM1</accession>
<evidence type="ECO:0000255" key="1">
    <source>
        <dbReference type="HAMAP-Rule" id="MF_00444"/>
    </source>
</evidence>
<gene>
    <name evidence="1" type="primary">clpP1</name>
    <name type="ordered locus">CYB_0610</name>
</gene>
<protein>
    <recommendedName>
        <fullName evidence="1">ATP-dependent Clp protease proteolytic subunit 1</fullName>
        <ecNumber evidence="1">3.4.21.92</ecNumber>
    </recommendedName>
    <alternativeName>
        <fullName evidence="1">Endopeptidase Clp 1</fullName>
    </alternativeName>
</protein>
<keyword id="KW-0963">Cytoplasm</keyword>
<keyword id="KW-0378">Hydrolase</keyword>
<keyword id="KW-0645">Protease</keyword>
<keyword id="KW-1185">Reference proteome</keyword>
<keyword id="KW-0720">Serine protease</keyword>
<feature type="chain" id="PRO_0000236412" description="ATP-dependent Clp protease proteolytic subunit 1">
    <location>
        <begin position="1"/>
        <end position="203"/>
    </location>
</feature>
<feature type="active site" description="Nucleophile" evidence="1">
    <location>
        <position position="101"/>
    </location>
</feature>
<feature type="active site" evidence="1">
    <location>
        <position position="126"/>
    </location>
</feature>
<dbReference type="EC" id="3.4.21.92" evidence="1"/>
<dbReference type="EMBL" id="CP000240">
    <property type="protein sequence ID" value="ABD01598.1"/>
    <property type="molecule type" value="Genomic_DNA"/>
</dbReference>
<dbReference type="RefSeq" id="WP_011432257.1">
    <property type="nucleotide sequence ID" value="NC_007776.1"/>
</dbReference>
<dbReference type="SMR" id="Q2JHM1"/>
<dbReference type="STRING" id="321332.CYB_0610"/>
<dbReference type="MEROPS" id="S14.001"/>
<dbReference type="KEGG" id="cyb:CYB_0610"/>
<dbReference type="eggNOG" id="COG0740">
    <property type="taxonomic scope" value="Bacteria"/>
</dbReference>
<dbReference type="HOGENOM" id="CLU_058707_3_2_3"/>
<dbReference type="OrthoDB" id="571524at2"/>
<dbReference type="Proteomes" id="UP000001938">
    <property type="component" value="Chromosome"/>
</dbReference>
<dbReference type="GO" id="GO:0005737">
    <property type="term" value="C:cytoplasm"/>
    <property type="evidence" value="ECO:0007669"/>
    <property type="project" value="UniProtKB-SubCell"/>
</dbReference>
<dbReference type="GO" id="GO:0009368">
    <property type="term" value="C:endopeptidase Clp complex"/>
    <property type="evidence" value="ECO:0007669"/>
    <property type="project" value="TreeGrafter"/>
</dbReference>
<dbReference type="GO" id="GO:0004176">
    <property type="term" value="F:ATP-dependent peptidase activity"/>
    <property type="evidence" value="ECO:0007669"/>
    <property type="project" value="InterPro"/>
</dbReference>
<dbReference type="GO" id="GO:0051117">
    <property type="term" value="F:ATPase binding"/>
    <property type="evidence" value="ECO:0007669"/>
    <property type="project" value="TreeGrafter"/>
</dbReference>
<dbReference type="GO" id="GO:0004252">
    <property type="term" value="F:serine-type endopeptidase activity"/>
    <property type="evidence" value="ECO:0007669"/>
    <property type="project" value="UniProtKB-UniRule"/>
</dbReference>
<dbReference type="GO" id="GO:0006515">
    <property type="term" value="P:protein quality control for misfolded or incompletely synthesized proteins"/>
    <property type="evidence" value="ECO:0007669"/>
    <property type="project" value="TreeGrafter"/>
</dbReference>
<dbReference type="CDD" id="cd07017">
    <property type="entry name" value="S14_ClpP_2"/>
    <property type="match status" value="1"/>
</dbReference>
<dbReference type="FunFam" id="3.90.226.10:FF:000001">
    <property type="entry name" value="ATP-dependent Clp protease proteolytic subunit"/>
    <property type="match status" value="1"/>
</dbReference>
<dbReference type="Gene3D" id="3.90.226.10">
    <property type="entry name" value="2-enoyl-CoA Hydratase, Chain A, domain 1"/>
    <property type="match status" value="1"/>
</dbReference>
<dbReference type="HAMAP" id="MF_00444">
    <property type="entry name" value="ClpP"/>
    <property type="match status" value="1"/>
</dbReference>
<dbReference type="InterPro" id="IPR001907">
    <property type="entry name" value="ClpP"/>
</dbReference>
<dbReference type="InterPro" id="IPR029045">
    <property type="entry name" value="ClpP/crotonase-like_dom_sf"/>
</dbReference>
<dbReference type="InterPro" id="IPR023562">
    <property type="entry name" value="ClpP/TepA"/>
</dbReference>
<dbReference type="InterPro" id="IPR033135">
    <property type="entry name" value="ClpP_His_AS"/>
</dbReference>
<dbReference type="InterPro" id="IPR018215">
    <property type="entry name" value="ClpP_Ser_AS"/>
</dbReference>
<dbReference type="NCBIfam" id="NF001368">
    <property type="entry name" value="PRK00277.1"/>
    <property type="match status" value="1"/>
</dbReference>
<dbReference type="NCBIfam" id="NF009205">
    <property type="entry name" value="PRK12553.1"/>
    <property type="match status" value="1"/>
</dbReference>
<dbReference type="PANTHER" id="PTHR10381">
    <property type="entry name" value="ATP-DEPENDENT CLP PROTEASE PROTEOLYTIC SUBUNIT"/>
    <property type="match status" value="1"/>
</dbReference>
<dbReference type="PANTHER" id="PTHR10381:SF70">
    <property type="entry name" value="ATP-DEPENDENT CLP PROTEASE PROTEOLYTIC SUBUNIT"/>
    <property type="match status" value="1"/>
</dbReference>
<dbReference type="Pfam" id="PF00574">
    <property type="entry name" value="CLP_protease"/>
    <property type="match status" value="1"/>
</dbReference>
<dbReference type="PRINTS" id="PR00127">
    <property type="entry name" value="CLPPROTEASEP"/>
</dbReference>
<dbReference type="SUPFAM" id="SSF52096">
    <property type="entry name" value="ClpP/crotonase"/>
    <property type="match status" value="1"/>
</dbReference>
<dbReference type="PROSITE" id="PS00382">
    <property type="entry name" value="CLP_PROTEASE_HIS"/>
    <property type="match status" value="1"/>
</dbReference>
<dbReference type="PROSITE" id="PS00381">
    <property type="entry name" value="CLP_PROTEASE_SER"/>
    <property type="match status" value="1"/>
</dbReference>
<proteinExistence type="inferred from homology"/>
<sequence>MPIGVPRVPYRLPGEPYSQWISLDDRLYQERILFIGEPIDDSLANTIVGVMLYLNSQDPQKDIVMYINSPGGSVTAGMAIYDTMNHIKPDIVTVCVGQAASMGAFLLAAGTKGKRFALPHSRIMLHQPSLGTIQGQASDIEIRARETLRVKRRMNEILAQTTGQPLEKIERDVERDFYLSATEAQAYGIVDRVIQERSEAMAS</sequence>
<name>CLPP1_SYNJB</name>